<accession>Q5R410</accession>
<protein>
    <recommendedName>
        <fullName>Vesicle-fusing ATPase</fullName>
        <ecNumber>3.6.4.6</ecNumber>
    </recommendedName>
    <alternativeName>
        <fullName>N-ethylmaleimide-sensitive fusion protein</fullName>
        <shortName>NEM-sensitive fusion protein</shortName>
    </alternativeName>
    <alternativeName>
        <fullName>Vesicular-fusion protein NSF</fullName>
    </alternativeName>
</protein>
<dbReference type="EC" id="3.6.4.6"/>
<dbReference type="EMBL" id="CR861450">
    <property type="protein sequence ID" value="CAH93506.1"/>
    <property type="molecule type" value="mRNA"/>
</dbReference>
<dbReference type="RefSeq" id="NP_001127050.1">
    <property type="nucleotide sequence ID" value="NM_001133578.1"/>
</dbReference>
<dbReference type="SMR" id="Q5R410"/>
<dbReference type="FunCoup" id="Q5R410">
    <property type="interactions" value="1025"/>
</dbReference>
<dbReference type="STRING" id="9601.ENSPPYP00000009318"/>
<dbReference type="Ensembl" id="ENSPPYT00000009694.3">
    <property type="protein sequence ID" value="ENSPPYP00000009318.3"/>
    <property type="gene ID" value="ENSPPYG00000008293.3"/>
</dbReference>
<dbReference type="GeneID" id="100174078"/>
<dbReference type="KEGG" id="pon:100174078"/>
<dbReference type="CTD" id="4905"/>
<dbReference type="eggNOG" id="KOG0741">
    <property type="taxonomic scope" value="Eukaryota"/>
</dbReference>
<dbReference type="GeneTree" id="ENSGT00530000064085"/>
<dbReference type="InParanoid" id="Q5R410"/>
<dbReference type="OrthoDB" id="9982946at2759"/>
<dbReference type="Proteomes" id="UP000001595">
    <property type="component" value="Chromosome 17"/>
</dbReference>
<dbReference type="GO" id="GO:0005795">
    <property type="term" value="C:Golgi stack"/>
    <property type="evidence" value="ECO:0007669"/>
    <property type="project" value="TreeGrafter"/>
</dbReference>
<dbReference type="GO" id="GO:0005524">
    <property type="term" value="F:ATP binding"/>
    <property type="evidence" value="ECO:0007669"/>
    <property type="project" value="UniProtKB-KW"/>
</dbReference>
<dbReference type="GO" id="GO:0016887">
    <property type="term" value="F:ATP hydrolysis activity"/>
    <property type="evidence" value="ECO:0007669"/>
    <property type="project" value="InterPro"/>
</dbReference>
<dbReference type="GO" id="GO:0046872">
    <property type="term" value="F:metal ion binding"/>
    <property type="evidence" value="ECO:0007669"/>
    <property type="project" value="UniProtKB-KW"/>
</dbReference>
<dbReference type="GO" id="GO:0043001">
    <property type="term" value="P:Golgi to plasma membrane protein transport"/>
    <property type="evidence" value="ECO:0007669"/>
    <property type="project" value="TreeGrafter"/>
</dbReference>
<dbReference type="GO" id="GO:0006891">
    <property type="term" value="P:intra-Golgi vesicle-mediated transport"/>
    <property type="evidence" value="ECO:0007669"/>
    <property type="project" value="TreeGrafter"/>
</dbReference>
<dbReference type="GO" id="GO:0035494">
    <property type="term" value="P:SNARE complex disassembly"/>
    <property type="evidence" value="ECO:0007669"/>
    <property type="project" value="InterPro"/>
</dbReference>
<dbReference type="CDD" id="cd19504">
    <property type="entry name" value="RecA-like_NSF-SEC18_r1-like"/>
    <property type="match status" value="1"/>
</dbReference>
<dbReference type="FunFam" id="1.10.8.60:FF:000026">
    <property type="entry name" value="vesicle-fusing ATPase isoform X1"/>
    <property type="match status" value="1"/>
</dbReference>
<dbReference type="FunFam" id="1.10.8.60:FF:000031">
    <property type="entry name" value="vesicle-fusing ATPase isoform X1"/>
    <property type="match status" value="1"/>
</dbReference>
<dbReference type="FunFam" id="2.40.40.20:FF:000006">
    <property type="entry name" value="vesicle-fusing ATPase isoform X1"/>
    <property type="match status" value="1"/>
</dbReference>
<dbReference type="FunFam" id="3.10.330.10:FF:000003">
    <property type="entry name" value="vesicle-fusing ATPase isoform X1"/>
    <property type="match status" value="1"/>
</dbReference>
<dbReference type="FunFam" id="3.40.50.300:FF:000166">
    <property type="entry name" value="vesicle-fusing ATPase isoform X1"/>
    <property type="match status" value="1"/>
</dbReference>
<dbReference type="FunFam" id="3.40.50.300:FF:000187">
    <property type="entry name" value="Vesicular-fusion ATPase SEC18"/>
    <property type="match status" value="1"/>
</dbReference>
<dbReference type="Gene3D" id="1.10.8.60">
    <property type="match status" value="2"/>
</dbReference>
<dbReference type="Gene3D" id="2.40.40.20">
    <property type="match status" value="1"/>
</dbReference>
<dbReference type="Gene3D" id="3.10.330.10">
    <property type="match status" value="1"/>
</dbReference>
<dbReference type="Gene3D" id="3.40.50.300">
    <property type="entry name" value="P-loop containing nucleotide triphosphate hydrolases"/>
    <property type="match status" value="2"/>
</dbReference>
<dbReference type="InterPro" id="IPR003593">
    <property type="entry name" value="AAA+_ATPase"/>
</dbReference>
<dbReference type="InterPro" id="IPR041569">
    <property type="entry name" value="AAA_lid_3"/>
</dbReference>
<dbReference type="InterPro" id="IPR009010">
    <property type="entry name" value="Asp_de-COase-like_dom_sf"/>
</dbReference>
<dbReference type="InterPro" id="IPR003959">
    <property type="entry name" value="ATPase_AAA_core"/>
</dbReference>
<dbReference type="InterPro" id="IPR003960">
    <property type="entry name" value="ATPase_AAA_CS"/>
</dbReference>
<dbReference type="InterPro" id="IPR004201">
    <property type="entry name" value="Cdc48_dom2"/>
</dbReference>
<dbReference type="InterPro" id="IPR029067">
    <property type="entry name" value="CDC48_domain_2-like_sf"/>
</dbReference>
<dbReference type="InterPro" id="IPR003338">
    <property type="entry name" value="CDC4_N-term_subdom"/>
</dbReference>
<dbReference type="InterPro" id="IPR054419">
    <property type="entry name" value="NSF_ATPase_lid"/>
</dbReference>
<dbReference type="InterPro" id="IPR027417">
    <property type="entry name" value="P-loop_NTPase"/>
</dbReference>
<dbReference type="InterPro" id="IPR039812">
    <property type="entry name" value="Vesicle-fus_ATPase"/>
</dbReference>
<dbReference type="PANTHER" id="PTHR23078:SF3">
    <property type="entry name" value="VESICLE-FUSING ATPASE"/>
    <property type="match status" value="1"/>
</dbReference>
<dbReference type="PANTHER" id="PTHR23078">
    <property type="entry name" value="VESICULAR-FUSION PROTEIN NSF"/>
    <property type="match status" value="1"/>
</dbReference>
<dbReference type="Pfam" id="PF00004">
    <property type="entry name" value="AAA"/>
    <property type="match status" value="2"/>
</dbReference>
<dbReference type="Pfam" id="PF17862">
    <property type="entry name" value="AAA_lid_3"/>
    <property type="match status" value="1"/>
</dbReference>
<dbReference type="Pfam" id="PF02933">
    <property type="entry name" value="CDC48_2"/>
    <property type="match status" value="1"/>
</dbReference>
<dbReference type="Pfam" id="PF02359">
    <property type="entry name" value="CDC48_N"/>
    <property type="match status" value="1"/>
</dbReference>
<dbReference type="Pfam" id="PF21964">
    <property type="entry name" value="NSF_ATPase_lid"/>
    <property type="match status" value="1"/>
</dbReference>
<dbReference type="PRINTS" id="PR00830">
    <property type="entry name" value="ENDOLAPTASE"/>
</dbReference>
<dbReference type="SMART" id="SM00382">
    <property type="entry name" value="AAA"/>
    <property type="match status" value="2"/>
</dbReference>
<dbReference type="SMART" id="SM01072">
    <property type="entry name" value="CDC48_2"/>
    <property type="match status" value="1"/>
</dbReference>
<dbReference type="SMART" id="SM01073">
    <property type="entry name" value="CDC48_N"/>
    <property type="match status" value="1"/>
</dbReference>
<dbReference type="SUPFAM" id="SSF50692">
    <property type="entry name" value="ADC-like"/>
    <property type="match status" value="1"/>
</dbReference>
<dbReference type="SUPFAM" id="SSF54585">
    <property type="entry name" value="Cdc48 domain 2-like"/>
    <property type="match status" value="1"/>
</dbReference>
<dbReference type="SUPFAM" id="SSF52540">
    <property type="entry name" value="P-loop containing nucleoside triphosphate hydrolases"/>
    <property type="match status" value="2"/>
</dbReference>
<dbReference type="PROSITE" id="PS00674">
    <property type="entry name" value="AAA"/>
    <property type="match status" value="1"/>
</dbReference>
<reference key="1">
    <citation type="submission" date="2004-11" db="EMBL/GenBank/DDBJ databases">
        <authorList>
            <consortium name="The German cDNA consortium"/>
        </authorList>
    </citation>
    <scope>NUCLEOTIDE SEQUENCE [LARGE SCALE MRNA]</scope>
    <source>
        <tissue>Brain cortex</tissue>
    </source>
</reference>
<name>NSF_PONAB</name>
<sequence>MAGRSMQAARCPTDELSLTNCAVVNEKDFQSGQHVIVRTSPNHRYTFTLKTHPSVVPGSIAFSLPQRKWAGLSIGQEIEVSLYTFDKAKQCIGTMTIEIDFLQKKSIDSNPYDTDKMAAEFIQQFNNQAFSVGQQLVFSFNEKLFGLLVKDIEAMDPSILKGEPATGKRQKIEVGLVVGNSQVAFEKAENSSLNLIGKAKTKENRQSIINPDWNFEKMGIGGLDKEFSDIFRRAFASRVFPPEIVEQMGCKHVKGILLYGPPGCGKTLLARQIGKMLNAREPKVVNGPEILNKYVGESEANIRKLFADAEEEQRRLGANSGLHIIIFDEIDAICKQRGSMAGSTGVHDTVVNQLLSKIDGVEQLNNILVIGMTNRPDLIDEALLRPGRLEVKMEIGLPDEKGRLQILHIHTARMRGHQLLSADVDIKELAMETKNFSGAELEGLVRAAQSTAMNRHIKASTKVEVDMEKAESLQVTRGDFLASLENDIKPAFGTNQEDYASYIMNGIIKWGDPVTRVLDDGELLVQQTKNSDRTPLVSVLLEGPPHSGKTALAAKIAEESNFPFIKICSPDKMIGFSETAKCQAMKKIFDDAYKSQLSCVVVDDIERLLDYVPIGPRFSNLVLQALLVLLKKAPPQGRKLLIIGTTSRKDVLQEMEMLNAFSTTIHVPNIATGEQLLEALELLGNFKDKERTTIAQQVKGKKVWIGIKKLLMLIEMSLQMDPEYRVRKFLALLREEGASPLDFD</sequence>
<evidence type="ECO:0000250" key="1"/>
<evidence type="ECO:0000250" key="2">
    <source>
        <dbReference type="UniProtKB" id="P18708"/>
    </source>
</evidence>
<evidence type="ECO:0000250" key="3">
    <source>
        <dbReference type="UniProtKB" id="P46459"/>
    </source>
</evidence>
<evidence type="ECO:0000250" key="4">
    <source>
        <dbReference type="UniProtKB" id="P46460"/>
    </source>
</evidence>
<evidence type="ECO:0000305" key="5"/>
<feature type="chain" id="PRO_0000263086" description="Vesicle-fusing ATPase">
    <location>
        <begin position="1"/>
        <end position="744"/>
    </location>
</feature>
<feature type="binding site" evidence="2">
    <location>
        <begin position="505"/>
        <end position="510"/>
    </location>
    <ligand>
        <name>ATP</name>
        <dbReference type="ChEBI" id="CHEBI:30616"/>
    </ligand>
</feature>
<feature type="binding site" evidence="2">
    <location>
        <begin position="545"/>
        <end position="552"/>
    </location>
    <ligand>
        <name>ATP</name>
        <dbReference type="ChEBI" id="CHEBI:30616"/>
    </ligand>
</feature>
<feature type="binding site" evidence="2">
    <location>
        <position position="550"/>
    </location>
    <ligand>
        <name>Mg(2+)</name>
        <dbReference type="ChEBI" id="CHEBI:18420"/>
    </ligand>
</feature>
<feature type="modified residue" description="N6-acetyllysine" evidence="4">
    <location>
        <position position="105"/>
    </location>
</feature>
<feature type="modified residue" description="Phosphoserine" evidence="3">
    <location>
        <position position="207"/>
    </location>
</feature>
<feature type="modified residue" description="Phosphotyrosine" evidence="4">
    <location>
        <position position="259"/>
    </location>
</feature>
<feature type="modified residue" description="Phosphoserine; by CDK16" evidence="4">
    <location>
        <position position="569"/>
    </location>
</feature>
<gene>
    <name type="primary">NSF</name>
</gene>
<proteinExistence type="evidence at transcript level"/>
<organism>
    <name type="scientific">Pongo abelii</name>
    <name type="common">Sumatran orangutan</name>
    <name type="synonym">Pongo pygmaeus abelii</name>
    <dbReference type="NCBI Taxonomy" id="9601"/>
    <lineage>
        <taxon>Eukaryota</taxon>
        <taxon>Metazoa</taxon>
        <taxon>Chordata</taxon>
        <taxon>Craniata</taxon>
        <taxon>Vertebrata</taxon>
        <taxon>Euteleostomi</taxon>
        <taxon>Mammalia</taxon>
        <taxon>Eutheria</taxon>
        <taxon>Euarchontoglires</taxon>
        <taxon>Primates</taxon>
        <taxon>Haplorrhini</taxon>
        <taxon>Catarrhini</taxon>
        <taxon>Hominidae</taxon>
        <taxon>Pongo</taxon>
    </lineage>
</organism>
<keyword id="KW-0007">Acetylation</keyword>
<keyword id="KW-0067">ATP-binding</keyword>
<keyword id="KW-0963">Cytoplasm</keyword>
<keyword id="KW-0378">Hydrolase</keyword>
<keyword id="KW-0460">Magnesium</keyword>
<keyword id="KW-0479">Metal-binding</keyword>
<keyword id="KW-0547">Nucleotide-binding</keyword>
<keyword id="KW-0597">Phosphoprotein</keyword>
<keyword id="KW-0653">Protein transport</keyword>
<keyword id="KW-1185">Reference proteome</keyword>
<keyword id="KW-0677">Repeat</keyword>
<keyword id="KW-0813">Transport</keyword>
<comment type="function">
    <text evidence="1">Required for vesicle-mediated transport. Catalyzes the fusion of transport vesicles within the Golgi cisternae. Is also required for transport from the endoplasmic reticulum to the Golgi stack. Seems to function as a fusion protein required for the delivery of cargo proteins to all compartments of the Golgi stack independent of vesicle origin. Interaction with AMPAR subunit GRIA2 leads to influence GRIA2 membrane cycling (By similarity).</text>
</comment>
<comment type="catalytic activity">
    <reaction>
        <text>ATP + H2O = ADP + phosphate + H(+)</text>
        <dbReference type="Rhea" id="RHEA:13065"/>
        <dbReference type="ChEBI" id="CHEBI:15377"/>
        <dbReference type="ChEBI" id="CHEBI:15378"/>
        <dbReference type="ChEBI" id="CHEBI:30616"/>
        <dbReference type="ChEBI" id="CHEBI:43474"/>
        <dbReference type="ChEBI" id="CHEBI:456216"/>
        <dbReference type="EC" id="3.6.4.6"/>
    </reaction>
</comment>
<comment type="cofactor">
    <cofactor evidence="2">
        <name>Mg(2+)</name>
        <dbReference type="ChEBI" id="CHEBI:18420"/>
    </cofactor>
    <text evidence="2">Binds 1 Mg(2+) ion per subunit.</text>
</comment>
<comment type="subunit">
    <text evidence="1">Homohexamer. Interacts with GABARAP and GABARAPL2. Interacts with GRIA2. Interacts with PLK2, leading to disrupt the interaction with GRIA2. Interacts with MUSK; may regulate MUSK endocytosis and activity (By similarity). Interacts with CDK16 (By similarity).</text>
</comment>
<comment type="subcellular location">
    <subcellularLocation>
        <location evidence="1">Cytoplasm</location>
    </subcellularLocation>
</comment>
<comment type="PTM">
    <text evidence="1">Phosphorylation at Ser-569 interferes with homohexamerization.</text>
</comment>
<comment type="similarity">
    <text evidence="5">Belongs to the AAA ATPase family.</text>
</comment>